<accession>B7L883</accession>
<keyword id="KW-0066">ATP synthesis</keyword>
<keyword id="KW-0997">Cell inner membrane</keyword>
<keyword id="KW-1003">Cell membrane</keyword>
<keyword id="KW-0138">CF(0)</keyword>
<keyword id="KW-0375">Hydrogen ion transport</keyword>
<keyword id="KW-0406">Ion transport</keyword>
<keyword id="KW-0446">Lipid-binding</keyword>
<keyword id="KW-0472">Membrane</keyword>
<keyword id="KW-1185">Reference proteome</keyword>
<keyword id="KW-0812">Transmembrane</keyword>
<keyword id="KW-1133">Transmembrane helix</keyword>
<keyword id="KW-0813">Transport</keyword>
<dbReference type="EMBL" id="CU928145">
    <property type="protein sequence ID" value="CAV00827.1"/>
    <property type="molecule type" value="Genomic_DNA"/>
</dbReference>
<dbReference type="RefSeq" id="WP_000429386.1">
    <property type="nucleotide sequence ID" value="NZ_CP028304.1"/>
</dbReference>
<dbReference type="SMR" id="B7L883"/>
<dbReference type="GeneID" id="98390858"/>
<dbReference type="KEGG" id="eck:EC55989_4212"/>
<dbReference type="HOGENOM" id="CLU_148047_1_0_6"/>
<dbReference type="Proteomes" id="UP000000746">
    <property type="component" value="Chromosome"/>
</dbReference>
<dbReference type="GO" id="GO:0005886">
    <property type="term" value="C:plasma membrane"/>
    <property type="evidence" value="ECO:0007669"/>
    <property type="project" value="UniProtKB-SubCell"/>
</dbReference>
<dbReference type="GO" id="GO:0045259">
    <property type="term" value="C:proton-transporting ATP synthase complex"/>
    <property type="evidence" value="ECO:0007669"/>
    <property type="project" value="UniProtKB-KW"/>
</dbReference>
<dbReference type="GO" id="GO:0033177">
    <property type="term" value="C:proton-transporting two-sector ATPase complex, proton-transporting domain"/>
    <property type="evidence" value="ECO:0007669"/>
    <property type="project" value="InterPro"/>
</dbReference>
<dbReference type="GO" id="GO:0008289">
    <property type="term" value="F:lipid binding"/>
    <property type="evidence" value="ECO:0007669"/>
    <property type="project" value="UniProtKB-KW"/>
</dbReference>
<dbReference type="GO" id="GO:0046933">
    <property type="term" value="F:proton-transporting ATP synthase activity, rotational mechanism"/>
    <property type="evidence" value="ECO:0007669"/>
    <property type="project" value="UniProtKB-UniRule"/>
</dbReference>
<dbReference type="CDD" id="cd18185">
    <property type="entry name" value="ATP-synt_Fo_c_ATPE"/>
    <property type="match status" value="1"/>
</dbReference>
<dbReference type="FunFam" id="1.20.20.10:FF:000002">
    <property type="entry name" value="ATP synthase subunit c"/>
    <property type="match status" value="1"/>
</dbReference>
<dbReference type="Gene3D" id="1.20.20.10">
    <property type="entry name" value="F1F0 ATP synthase subunit C"/>
    <property type="match status" value="1"/>
</dbReference>
<dbReference type="HAMAP" id="MF_01396">
    <property type="entry name" value="ATP_synth_c_bact"/>
    <property type="match status" value="1"/>
</dbReference>
<dbReference type="InterPro" id="IPR005953">
    <property type="entry name" value="ATP_synth_csu_bac/chlpt"/>
</dbReference>
<dbReference type="InterPro" id="IPR000454">
    <property type="entry name" value="ATP_synth_F0_csu"/>
</dbReference>
<dbReference type="InterPro" id="IPR020537">
    <property type="entry name" value="ATP_synth_F0_csu_DDCD_BS"/>
</dbReference>
<dbReference type="InterPro" id="IPR038662">
    <property type="entry name" value="ATP_synth_F0_csu_sf"/>
</dbReference>
<dbReference type="InterPro" id="IPR002379">
    <property type="entry name" value="ATPase_proteolipid_c-like_dom"/>
</dbReference>
<dbReference type="InterPro" id="IPR035921">
    <property type="entry name" value="F/V-ATP_Csub_sf"/>
</dbReference>
<dbReference type="NCBIfam" id="TIGR01260">
    <property type="entry name" value="ATP_synt_c"/>
    <property type="match status" value="1"/>
</dbReference>
<dbReference type="NCBIfam" id="NF005363">
    <property type="entry name" value="PRK06876.1"/>
    <property type="match status" value="1"/>
</dbReference>
<dbReference type="Pfam" id="PF00137">
    <property type="entry name" value="ATP-synt_C"/>
    <property type="match status" value="1"/>
</dbReference>
<dbReference type="PRINTS" id="PR00124">
    <property type="entry name" value="ATPASEC"/>
</dbReference>
<dbReference type="SUPFAM" id="SSF81333">
    <property type="entry name" value="F1F0 ATP synthase subunit C"/>
    <property type="match status" value="1"/>
</dbReference>
<dbReference type="PROSITE" id="PS00605">
    <property type="entry name" value="ATPASE_C"/>
    <property type="match status" value="1"/>
</dbReference>
<proteinExistence type="inferred from homology"/>
<feature type="chain" id="PRO_1000184363" description="ATP synthase subunit c">
    <location>
        <begin position="1"/>
        <end position="79"/>
    </location>
</feature>
<feature type="transmembrane region" description="Helical" evidence="1">
    <location>
        <begin position="11"/>
        <end position="31"/>
    </location>
</feature>
<feature type="transmembrane region" description="Helical" evidence="1">
    <location>
        <begin position="53"/>
        <end position="73"/>
    </location>
</feature>
<feature type="site" description="Reversibly protonated during proton transport" evidence="1">
    <location>
        <position position="61"/>
    </location>
</feature>
<sequence length="79" mass="8256">MENLNMDLLYMAAAVMMGLAAIGAAIGIGILGGKFLEGAARQPDLIPLLRTQFFIVMGLVDAIPMIAVGLGLYVMFAVA</sequence>
<protein>
    <recommendedName>
        <fullName evidence="1">ATP synthase subunit c</fullName>
    </recommendedName>
    <alternativeName>
        <fullName evidence="1">ATP synthase F(0) sector subunit c</fullName>
    </alternativeName>
    <alternativeName>
        <fullName evidence="1">F-type ATPase subunit c</fullName>
        <shortName evidence="1">F-ATPase subunit c</shortName>
    </alternativeName>
    <alternativeName>
        <fullName evidence="1">Lipid-binding protein</fullName>
    </alternativeName>
</protein>
<comment type="function">
    <text evidence="1">F(1)F(0) ATP synthase produces ATP from ADP in the presence of a proton or sodium gradient. F-type ATPases consist of two structural domains, F(1) containing the extramembraneous catalytic core and F(0) containing the membrane proton channel, linked together by a central stalk and a peripheral stalk. During catalysis, ATP synthesis in the catalytic domain of F(1) is coupled via a rotary mechanism of the central stalk subunits to proton translocation.</text>
</comment>
<comment type="function">
    <text evidence="1">Key component of the F(0) channel; it plays a direct role in translocation across the membrane. A homomeric c-ring of between 10-14 subunits forms the central stalk rotor element with the F(1) delta and epsilon subunits.</text>
</comment>
<comment type="subunit">
    <text evidence="1">F-type ATPases have 2 components, F(1) - the catalytic core - and F(0) - the membrane proton channel. F(1) has five subunits: alpha(3), beta(3), gamma(1), delta(1), epsilon(1). F(0) has three main subunits: a(1), b(2) and c(10-14). The alpha and beta chains form an alternating ring which encloses part of the gamma chain. F(1) is attached to F(0) by a central stalk formed by the gamma and epsilon chains, while a peripheral stalk is formed by the delta and b chains.</text>
</comment>
<comment type="subcellular location">
    <subcellularLocation>
        <location evidence="1">Cell inner membrane</location>
        <topology evidence="1">Multi-pass membrane protein</topology>
    </subcellularLocation>
</comment>
<comment type="similarity">
    <text evidence="1">Belongs to the ATPase C chain family.</text>
</comment>
<gene>
    <name evidence="1" type="primary">atpE</name>
    <name type="ordered locus">EC55989_4212</name>
</gene>
<reference key="1">
    <citation type="journal article" date="2009" name="PLoS Genet.">
        <title>Organised genome dynamics in the Escherichia coli species results in highly diverse adaptive paths.</title>
        <authorList>
            <person name="Touchon M."/>
            <person name="Hoede C."/>
            <person name="Tenaillon O."/>
            <person name="Barbe V."/>
            <person name="Baeriswyl S."/>
            <person name="Bidet P."/>
            <person name="Bingen E."/>
            <person name="Bonacorsi S."/>
            <person name="Bouchier C."/>
            <person name="Bouvet O."/>
            <person name="Calteau A."/>
            <person name="Chiapello H."/>
            <person name="Clermont O."/>
            <person name="Cruveiller S."/>
            <person name="Danchin A."/>
            <person name="Diard M."/>
            <person name="Dossat C."/>
            <person name="Karoui M.E."/>
            <person name="Frapy E."/>
            <person name="Garry L."/>
            <person name="Ghigo J.M."/>
            <person name="Gilles A.M."/>
            <person name="Johnson J."/>
            <person name="Le Bouguenec C."/>
            <person name="Lescat M."/>
            <person name="Mangenot S."/>
            <person name="Martinez-Jehanne V."/>
            <person name="Matic I."/>
            <person name="Nassif X."/>
            <person name="Oztas S."/>
            <person name="Petit M.A."/>
            <person name="Pichon C."/>
            <person name="Rouy Z."/>
            <person name="Ruf C.S."/>
            <person name="Schneider D."/>
            <person name="Tourret J."/>
            <person name="Vacherie B."/>
            <person name="Vallenet D."/>
            <person name="Medigue C."/>
            <person name="Rocha E.P.C."/>
            <person name="Denamur E."/>
        </authorList>
    </citation>
    <scope>NUCLEOTIDE SEQUENCE [LARGE SCALE GENOMIC DNA]</scope>
    <source>
        <strain>55989 / EAEC</strain>
    </source>
</reference>
<organism>
    <name type="scientific">Escherichia coli (strain 55989 / EAEC)</name>
    <dbReference type="NCBI Taxonomy" id="585055"/>
    <lineage>
        <taxon>Bacteria</taxon>
        <taxon>Pseudomonadati</taxon>
        <taxon>Pseudomonadota</taxon>
        <taxon>Gammaproteobacteria</taxon>
        <taxon>Enterobacterales</taxon>
        <taxon>Enterobacteriaceae</taxon>
        <taxon>Escherichia</taxon>
    </lineage>
</organism>
<name>ATPL_ECO55</name>
<evidence type="ECO:0000255" key="1">
    <source>
        <dbReference type="HAMAP-Rule" id="MF_01396"/>
    </source>
</evidence>